<gene>
    <name type="ORF">LBRM_14_1360</name>
</gene>
<feature type="chain" id="PRO_0000416433" description="Bifunctional NAD(P)H-hydrate repair enzyme">
    <location>
        <begin position="1"/>
        <end position="561"/>
    </location>
</feature>
<feature type="domain" description="YjeF N-terminal">
    <location>
        <begin position="29"/>
        <end position="235"/>
    </location>
</feature>
<feature type="domain" description="YjeF C-terminal">
    <location>
        <begin position="249"/>
        <end position="548"/>
    </location>
</feature>
<feature type="region of interest" description="NAD(P)H-hydrate epimerase" evidence="1">
    <location>
        <begin position="1"/>
        <end position="241"/>
    </location>
</feature>
<feature type="region of interest" description="NADPHX 1; for epimerase activity" evidence="1">
    <location>
        <begin position="77"/>
        <end position="81"/>
    </location>
</feature>
<feature type="region of interest" description="NADPHX 1; for epimerase activity" evidence="1">
    <location>
        <begin position="149"/>
        <end position="155"/>
    </location>
</feature>
<feature type="region of interest" description="ADP-dependent (S)-NAD(P)H-hydrate dehydratase" evidence="1">
    <location>
        <begin position="249"/>
        <end position="561"/>
    </location>
</feature>
<feature type="region of interest" description="NADPHX 2; for dehydratase activity" evidence="1">
    <location>
        <begin position="417"/>
        <end position="423"/>
    </location>
</feature>
<feature type="binding site" evidence="1">
    <location>
        <position position="78"/>
    </location>
    <ligand>
        <name>K(+)</name>
        <dbReference type="ChEBI" id="CHEBI:29103"/>
    </ligand>
</feature>
<feature type="binding site" evidence="1">
    <location>
        <position position="145"/>
    </location>
    <ligand>
        <name>K(+)</name>
        <dbReference type="ChEBI" id="CHEBI:29103"/>
    </ligand>
</feature>
<feature type="binding site" evidence="1">
    <location>
        <position position="160"/>
    </location>
    <ligand>
        <name>(6S)-NADPHX</name>
        <dbReference type="ChEBI" id="CHEBI:64076"/>
        <label>1</label>
        <note>for epimerase activity</note>
    </ligand>
</feature>
<feature type="binding site" evidence="1">
    <location>
        <position position="178"/>
    </location>
    <ligand>
        <name>(6S)-NADPHX</name>
        <dbReference type="ChEBI" id="CHEBI:64076"/>
        <label>1</label>
        <note>for epimerase activity</note>
    </ligand>
</feature>
<feature type="binding site" evidence="1">
    <location>
        <position position="181"/>
    </location>
    <ligand>
        <name>K(+)</name>
        <dbReference type="ChEBI" id="CHEBI:29103"/>
    </ligand>
</feature>
<feature type="binding site" evidence="1">
    <location>
        <position position="351"/>
    </location>
    <ligand>
        <name>(6S)-NADPHX</name>
        <dbReference type="ChEBI" id="CHEBI:64076"/>
        <label>2</label>
        <note>for dehydratase activity</note>
    </ligand>
</feature>
<feature type="binding site" evidence="1">
    <location>
        <begin position="454"/>
        <end position="458"/>
    </location>
    <ligand>
        <name>ADP</name>
        <dbReference type="ChEBI" id="CHEBI:456216"/>
    </ligand>
</feature>
<feature type="binding site" evidence="1">
    <location>
        <begin position="475"/>
        <end position="484"/>
    </location>
    <ligand>
        <name>ADP</name>
        <dbReference type="ChEBI" id="CHEBI:456216"/>
    </ligand>
</feature>
<feature type="binding site" evidence="1">
    <location>
        <position position="485"/>
    </location>
    <ligand>
        <name>(6S)-NADPHX</name>
        <dbReference type="ChEBI" id="CHEBI:64076"/>
        <label>2</label>
        <note>for dehydratase activity</note>
    </ligand>
</feature>
<accession>A4H7T9</accession>
<dbReference type="EC" id="4.2.1.136"/>
<dbReference type="EC" id="5.1.99.6"/>
<dbReference type="EMBL" id="FR798988">
    <property type="protein sequence ID" value="CAM37606.1"/>
    <property type="molecule type" value="Genomic_DNA"/>
</dbReference>
<dbReference type="RefSeq" id="XP_001563422.1">
    <property type="nucleotide sequence ID" value="XM_001563372.1"/>
</dbReference>
<dbReference type="SMR" id="A4H7T9"/>
<dbReference type="STRING" id="5660.A4H7T9"/>
<dbReference type="GeneID" id="5413933"/>
<dbReference type="KEGG" id="lbz:LBRM_14_1360"/>
<dbReference type="VEuPathDB" id="TriTrypDB:LbrM.14.1360"/>
<dbReference type="InParanoid" id="A4H7T9"/>
<dbReference type="OMA" id="NAHKGDY"/>
<dbReference type="Proteomes" id="UP000007258">
    <property type="component" value="Chromosome 14"/>
</dbReference>
<dbReference type="GO" id="GO:0052855">
    <property type="term" value="F:ADP-dependent NAD(P)H-hydrate dehydratase activity"/>
    <property type="evidence" value="ECO:0007669"/>
    <property type="project" value="UniProtKB-EC"/>
</dbReference>
<dbReference type="GO" id="GO:0005524">
    <property type="term" value="F:ATP binding"/>
    <property type="evidence" value="ECO:0007669"/>
    <property type="project" value="UniProtKB-KW"/>
</dbReference>
<dbReference type="GO" id="GO:0047453">
    <property type="term" value="F:ATP-dependent NAD(P)H-hydrate dehydratase activity"/>
    <property type="evidence" value="ECO:0007669"/>
    <property type="project" value="UniProtKB-UniRule"/>
</dbReference>
<dbReference type="GO" id="GO:0046872">
    <property type="term" value="F:metal ion binding"/>
    <property type="evidence" value="ECO:0007669"/>
    <property type="project" value="UniProtKB-KW"/>
</dbReference>
<dbReference type="GO" id="GO:0052856">
    <property type="term" value="F:NAD(P)HX epimerase activity"/>
    <property type="evidence" value="ECO:0007669"/>
    <property type="project" value="UniProtKB-UniRule"/>
</dbReference>
<dbReference type="GO" id="GO:0110051">
    <property type="term" value="P:metabolite repair"/>
    <property type="evidence" value="ECO:0007669"/>
    <property type="project" value="TreeGrafter"/>
</dbReference>
<dbReference type="GO" id="GO:0046496">
    <property type="term" value="P:nicotinamide nucleotide metabolic process"/>
    <property type="evidence" value="ECO:0007669"/>
    <property type="project" value="UniProtKB-UniRule"/>
</dbReference>
<dbReference type="CDD" id="cd01171">
    <property type="entry name" value="YXKO-related"/>
    <property type="match status" value="1"/>
</dbReference>
<dbReference type="FunFam" id="3.40.1190.20:FF:000017">
    <property type="entry name" value="Multifunctional fusion protein"/>
    <property type="match status" value="1"/>
</dbReference>
<dbReference type="FunFam" id="3.40.50.10260:FF:000003">
    <property type="entry name" value="Multifunctional fusion protein"/>
    <property type="match status" value="1"/>
</dbReference>
<dbReference type="Gene3D" id="3.40.1190.20">
    <property type="match status" value="1"/>
</dbReference>
<dbReference type="Gene3D" id="3.40.50.10260">
    <property type="entry name" value="YjeF N-terminal domain"/>
    <property type="match status" value="1"/>
</dbReference>
<dbReference type="HAMAP" id="MF_01965">
    <property type="entry name" value="NADHX_dehydratase"/>
    <property type="match status" value="1"/>
</dbReference>
<dbReference type="HAMAP" id="MF_01966">
    <property type="entry name" value="NADHX_epimerase"/>
    <property type="match status" value="1"/>
</dbReference>
<dbReference type="InterPro" id="IPR017953">
    <property type="entry name" value="Carbohydrate_kinase_pred_CS"/>
</dbReference>
<dbReference type="InterPro" id="IPR000631">
    <property type="entry name" value="CARKD"/>
</dbReference>
<dbReference type="InterPro" id="IPR030677">
    <property type="entry name" value="Nnr"/>
</dbReference>
<dbReference type="InterPro" id="IPR029056">
    <property type="entry name" value="Ribokinase-like"/>
</dbReference>
<dbReference type="InterPro" id="IPR004443">
    <property type="entry name" value="YjeF_N_dom"/>
</dbReference>
<dbReference type="InterPro" id="IPR036652">
    <property type="entry name" value="YjeF_N_dom_sf"/>
</dbReference>
<dbReference type="NCBIfam" id="TIGR00196">
    <property type="entry name" value="yjeF_cterm"/>
    <property type="match status" value="1"/>
</dbReference>
<dbReference type="NCBIfam" id="TIGR00197">
    <property type="entry name" value="yjeF_nterm"/>
    <property type="match status" value="1"/>
</dbReference>
<dbReference type="PANTHER" id="PTHR12592:SF0">
    <property type="entry name" value="ATP-DEPENDENT (S)-NAD(P)H-HYDRATE DEHYDRATASE"/>
    <property type="match status" value="1"/>
</dbReference>
<dbReference type="PANTHER" id="PTHR12592">
    <property type="entry name" value="ATP-DEPENDENT (S)-NAD(P)H-HYDRATE DEHYDRATASE FAMILY MEMBER"/>
    <property type="match status" value="1"/>
</dbReference>
<dbReference type="Pfam" id="PF01256">
    <property type="entry name" value="Carb_kinase"/>
    <property type="match status" value="1"/>
</dbReference>
<dbReference type="Pfam" id="PF03853">
    <property type="entry name" value="YjeF_N"/>
    <property type="match status" value="1"/>
</dbReference>
<dbReference type="PIRSF" id="PIRSF017184">
    <property type="entry name" value="Nnr"/>
    <property type="match status" value="1"/>
</dbReference>
<dbReference type="SUPFAM" id="SSF53613">
    <property type="entry name" value="Ribokinase-like"/>
    <property type="match status" value="1"/>
</dbReference>
<dbReference type="SUPFAM" id="SSF64153">
    <property type="entry name" value="YjeF N-terminal domain-like"/>
    <property type="match status" value="1"/>
</dbReference>
<dbReference type="PROSITE" id="PS01050">
    <property type="entry name" value="YJEF_C_2"/>
    <property type="match status" value="1"/>
</dbReference>
<dbReference type="PROSITE" id="PS51383">
    <property type="entry name" value="YJEF_C_3"/>
    <property type="match status" value="1"/>
</dbReference>
<dbReference type="PROSITE" id="PS51385">
    <property type="entry name" value="YJEF_N"/>
    <property type="match status" value="1"/>
</dbReference>
<evidence type="ECO:0000250" key="1"/>
<evidence type="ECO:0000305" key="2"/>
<organism>
    <name type="scientific">Leishmania braziliensis</name>
    <dbReference type="NCBI Taxonomy" id="5660"/>
    <lineage>
        <taxon>Eukaryota</taxon>
        <taxon>Discoba</taxon>
        <taxon>Euglenozoa</taxon>
        <taxon>Kinetoplastea</taxon>
        <taxon>Metakinetoplastina</taxon>
        <taxon>Trypanosomatida</taxon>
        <taxon>Trypanosomatidae</taxon>
        <taxon>Leishmaniinae</taxon>
        <taxon>Leishmania</taxon>
        <taxon>Leishmania braziliensis species complex</taxon>
    </lineage>
</organism>
<name>NNR_LEIBR</name>
<proteinExistence type="inferred from homology"/>
<sequence>MLSRISERCTAVTGLEQVLCRHVWSAAWLRDAEPAAAASQSIDLSCLMERAGLAAYDVFASLYASQRHWLILVGSGNNGGDGYVIARHAREAGRKVTVLSMPHSKPLPTEATNAQHAWQAVGGTETMINPGTSLHLPTDVDLVVDGLLGTGISGPPREHYEEVIRHINALPVPRVAIDIPSGLNAETGEAAGACVKADHTATFICLKPGLLTGQARDYVGQLHYRSLGLEEWMIAAERMDAALCRRVALGDVYGYFSTRRSAVAHKGSCGKVVLIGGDHGFGGAILMSAEACLTIGAGLTRVLTRPEYVAPLLTRCPEVMVTAVETETSGQLEQQMVEAFEWASTLAVGPGLGTGAYGQAALSAALQQAEMHQDKTLVLDADALNLLAERLHSKEMGAAVGAGKYLPVLPNSIITPHPGEAARLLACRVADVEKDRLAAARRLAAILGGTCLLKGPGTVVHCQSSGKTAIVDAGNAGMASGGMGDVLTGLLAGLAAQRMMHDTFDTTCAAALVHGVAADMVAAEDGRGTRGIRATELIPRIPFIVNASVPSSATQQRPSGL</sequence>
<reference key="1">
    <citation type="journal article" date="2007" name="Nat. Genet.">
        <title>Comparative genomic analysis of three Leishmania species that cause diverse human disease.</title>
        <authorList>
            <person name="Peacock C.S."/>
            <person name="Seeger K."/>
            <person name="Harris D."/>
            <person name="Murphy L."/>
            <person name="Ruiz J.C."/>
            <person name="Quail M.A."/>
            <person name="Peters N."/>
            <person name="Adlem E."/>
            <person name="Tivey A."/>
            <person name="Aslett M."/>
            <person name="Kerhornou A."/>
            <person name="Ivens A."/>
            <person name="Fraser A."/>
            <person name="Rajandream M.-A."/>
            <person name="Carver T."/>
            <person name="Norbertczak H."/>
            <person name="Chillingworth T."/>
            <person name="Hance Z."/>
            <person name="Jagels K."/>
            <person name="Moule S."/>
            <person name="Ormond D."/>
            <person name="Rutter S."/>
            <person name="Sqaures R."/>
            <person name="Whitehead S."/>
            <person name="Rabbinowitsch E."/>
            <person name="Arrowsmith C."/>
            <person name="White B."/>
            <person name="Thurston S."/>
            <person name="Bringaud F."/>
            <person name="Baldauf S.L."/>
            <person name="Faulconbridge A."/>
            <person name="Jeffares D."/>
            <person name="Depledge D.P."/>
            <person name="Oyola S.O."/>
            <person name="Hilley J.D."/>
            <person name="Brito L.O."/>
            <person name="Tosi L.R.O."/>
            <person name="Barrell B."/>
            <person name="Cruz A.K."/>
            <person name="Mottram J.C."/>
            <person name="Smith D.F."/>
            <person name="Berriman M."/>
        </authorList>
    </citation>
    <scope>NUCLEOTIDE SEQUENCE [LARGE SCALE GENOMIC DNA]</scope>
    <source>
        <strain>MHOM/BR/75/M2904</strain>
    </source>
</reference>
<keyword id="KW-0067">ATP-binding</keyword>
<keyword id="KW-0413">Isomerase</keyword>
<keyword id="KW-0456">Lyase</keyword>
<keyword id="KW-0479">Metal-binding</keyword>
<keyword id="KW-0511">Multifunctional enzyme</keyword>
<keyword id="KW-0520">NAD</keyword>
<keyword id="KW-0521">NADP</keyword>
<keyword id="KW-0547">Nucleotide-binding</keyword>
<keyword id="KW-0630">Potassium</keyword>
<keyword id="KW-1185">Reference proteome</keyword>
<protein>
    <recommendedName>
        <fullName>Bifunctional NAD(P)H-hydrate repair enzyme</fullName>
    </recommendedName>
    <alternativeName>
        <fullName>Nicotinamide nucleotide repair protein</fullName>
    </alternativeName>
    <domain>
        <recommendedName>
            <fullName>ADP-dependent (S)-NAD(P)H-hydrate dehydratase</fullName>
            <ecNumber>4.2.1.136</ecNumber>
        </recommendedName>
        <alternativeName>
            <fullName>ADP-dependent NAD(P)HX dehydratase</fullName>
        </alternativeName>
    </domain>
    <domain>
        <recommendedName>
            <fullName>NAD(P)H-hydrate epimerase</fullName>
            <ecNumber>5.1.99.6</ecNumber>
        </recommendedName>
        <alternativeName>
            <fullName>NAD(P)HX epimerase</fullName>
        </alternativeName>
    </domain>
</protein>
<comment type="function">
    <text evidence="1">Bifunctional enzyme that catalyzes the epimerization of the S- and R-forms of NAD(P)HX and the dehydration of the S-form of NAD(P)HX at the expense of ADP, which is converted to AMP. This allows the repair of both epimers of NAD(P)HX, a damaged form of NAD(P)H that is a result of enzymatic or heat-dependent hydration (By similarity).</text>
</comment>
<comment type="catalytic activity">
    <reaction>
        <text>(6S)-NADHX + ADP = AMP + phosphate + NADH + H(+)</text>
        <dbReference type="Rhea" id="RHEA:32223"/>
        <dbReference type="ChEBI" id="CHEBI:15378"/>
        <dbReference type="ChEBI" id="CHEBI:43474"/>
        <dbReference type="ChEBI" id="CHEBI:57945"/>
        <dbReference type="ChEBI" id="CHEBI:64074"/>
        <dbReference type="ChEBI" id="CHEBI:456215"/>
        <dbReference type="ChEBI" id="CHEBI:456216"/>
        <dbReference type="EC" id="4.2.1.136"/>
    </reaction>
</comment>
<comment type="catalytic activity">
    <reaction>
        <text>(6S)-NADPHX + ADP = AMP + phosphate + NADPH + H(+)</text>
        <dbReference type="Rhea" id="RHEA:32235"/>
        <dbReference type="ChEBI" id="CHEBI:15378"/>
        <dbReference type="ChEBI" id="CHEBI:43474"/>
        <dbReference type="ChEBI" id="CHEBI:57783"/>
        <dbReference type="ChEBI" id="CHEBI:64076"/>
        <dbReference type="ChEBI" id="CHEBI:456215"/>
        <dbReference type="ChEBI" id="CHEBI:456216"/>
        <dbReference type="EC" id="4.2.1.136"/>
    </reaction>
</comment>
<comment type="catalytic activity">
    <reaction>
        <text>(6R)-NADHX = (6S)-NADHX</text>
        <dbReference type="Rhea" id="RHEA:32215"/>
        <dbReference type="ChEBI" id="CHEBI:64074"/>
        <dbReference type="ChEBI" id="CHEBI:64075"/>
        <dbReference type="EC" id="5.1.99.6"/>
    </reaction>
</comment>
<comment type="catalytic activity">
    <reaction>
        <text>(6R)-NADPHX = (6S)-NADPHX</text>
        <dbReference type="Rhea" id="RHEA:32227"/>
        <dbReference type="ChEBI" id="CHEBI:64076"/>
        <dbReference type="ChEBI" id="CHEBI:64077"/>
        <dbReference type="EC" id="5.1.99.6"/>
    </reaction>
</comment>
<comment type="cofactor">
    <cofactor evidence="1">
        <name>K(+)</name>
        <dbReference type="ChEBI" id="CHEBI:29103"/>
    </cofactor>
    <text evidence="1">Binds 1 potassium ion per subunit.</text>
</comment>
<comment type="similarity">
    <text evidence="2">In the N-terminal section; belongs to the NnrE/AIBP family.</text>
</comment>
<comment type="similarity">
    <text evidence="2">In the C-terminal section; belongs to the NnrD/CARKD family.</text>
</comment>